<sequence>MDPRARYPPGIGNGRGGNPNYYGRGPPPSQHQQHQHQHQQPPHPHHHQYVQRQPQPQQTPHNSQHQQWLRRNQIAAEAAGASEQKAPPVADGIDSSSQDWKAQLKLPPQDTRYRTEDVTATKGNEFEDYFLKRELLMGIYEKGFERPSPIQEESIPIALTGSDILARAKNGTGKTAAFCIPALEKIDQDKNAIQVVILVPTRELALQTSQVCKELGKHLKIQVMVTTGGTSLKDDIVRLYQPVHLLVGTPGRILDLTKKGVCVLKNCSMLVMDEADKLLSPEFQPSIQELIRYLPSNRQILMFSATFPVTVKEFKDKYLPKPYVINLMDELTLKGITQFYAFVEERQKVHCLNTLFSKLQINQSIIFCNSVNRVELLAKKITELGYSCFYIHAKMLQDHRNRVFHDFRNGACRNLVCTDLFTRGIDIQAVNVVINFDFPKSAETYLHRVGRSGRFGHLGLAVNLITYEDRFNLYRIEQELGTEIKPIPPQIDRAIYCQ</sequence>
<comment type="function">
    <text evidence="1">ATP-dependent RNA helicase involved in mRNA turnover, and more specifically in mRNA decapping.</text>
</comment>
<comment type="catalytic activity">
    <reaction>
        <text>ATP + H2O = ADP + phosphate + H(+)</text>
        <dbReference type="Rhea" id="RHEA:13065"/>
        <dbReference type="ChEBI" id="CHEBI:15377"/>
        <dbReference type="ChEBI" id="CHEBI:15378"/>
        <dbReference type="ChEBI" id="CHEBI:30616"/>
        <dbReference type="ChEBI" id="CHEBI:43474"/>
        <dbReference type="ChEBI" id="CHEBI:456216"/>
        <dbReference type="EC" id="3.6.4.13"/>
    </reaction>
</comment>
<comment type="subcellular location">
    <subcellularLocation>
        <location evidence="1">Cytoplasm</location>
        <location evidence="1">P-body</location>
    </subcellularLocation>
    <text evidence="1">Is concentrated in several cytoplasmic foci called P bodies (or cytoplasmic processing bodies) which represent sites of mRNA decapping and 5' to 3' exonucleotidic decay.</text>
</comment>
<comment type="domain">
    <text>The Q motif is unique to and characteristic of the DEAD box family of RNA helicases and controls ATP binding and hydrolysis.</text>
</comment>
<comment type="similarity">
    <text evidence="5">Belongs to the DEAD box helicase family. DDX6/DHH1 subfamily.</text>
</comment>
<comment type="sequence caution" evidence="5">
    <conflict type="frameshift">
        <sequence resource="EMBL" id="AK101477"/>
    </conflict>
</comment>
<dbReference type="EC" id="3.6.4.13"/>
<dbReference type="EMBL" id="AL663006">
    <property type="protein sequence ID" value="CAE04571.1"/>
    <property type="molecule type" value="Genomic_DNA"/>
</dbReference>
<dbReference type="EMBL" id="AP008210">
    <property type="protein sequence ID" value="BAF15322.1"/>
    <property type="molecule type" value="Genomic_DNA"/>
</dbReference>
<dbReference type="EMBL" id="AP014960">
    <property type="protein sequence ID" value="BAS90229.1"/>
    <property type="molecule type" value="Genomic_DNA"/>
</dbReference>
<dbReference type="EMBL" id="CM000141">
    <property type="protein sequence ID" value="EAZ31443.1"/>
    <property type="molecule type" value="Genomic_DNA"/>
</dbReference>
<dbReference type="EMBL" id="AK071636">
    <property type="protein sequence ID" value="BAG92597.1"/>
    <property type="molecule type" value="mRNA"/>
</dbReference>
<dbReference type="EMBL" id="AK101477">
    <property type="status" value="NOT_ANNOTATED_CDS"/>
    <property type="molecule type" value="mRNA"/>
</dbReference>
<dbReference type="RefSeq" id="XP_015636229.1">
    <property type="nucleotide sequence ID" value="XM_015780743.1"/>
</dbReference>
<dbReference type="RefSeq" id="XP_015636231.1">
    <property type="nucleotide sequence ID" value="XM_015780745.1"/>
</dbReference>
<dbReference type="RefSeq" id="XP_015636232.1">
    <property type="nucleotide sequence ID" value="XM_015780746.1"/>
</dbReference>
<dbReference type="SMR" id="Q7XMK8"/>
<dbReference type="FunCoup" id="Q7XMK8">
    <property type="interactions" value="3451"/>
</dbReference>
<dbReference type="STRING" id="39947.Q7XMK8"/>
<dbReference type="PaxDb" id="39947-Q7XMK8"/>
<dbReference type="EnsemblPlants" id="Os04t0533000-01">
    <property type="protein sequence ID" value="Os04t0533000-01"/>
    <property type="gene ID" value="Os04g0533000"/>
</dbReference>
<dbReference type="EnsemblPlants" id="Os04t0533000-02">
    <property type="protein sequence ID" value="Os04t0533000-02"/>
    <property type="gene ID" value="Os04g0533000"/>
</dbReference>
<dbReference type="GeneID" id="4336501"/>
<dbReference type="Gramene" id="Os04t0533000-01">
    <property type="protein sequence ID" value="Os04t0533000-01"/>
    <property type="gene ID" value="Os04g0533000"/>
</dbReference>
<dbReference type="Gramene" id="Os04t0533000-02">
    <property type="protein sequence ID" value="Os04t0533000-02"/>
    <property type="gene ID" value="Os04g0533000"/>
</dbReference>
<dbReference type="KEGG" id="dosa:Os04g0533000"/>
<dbReference type="KEGG" id="osa:4336501"/>
<dbReference type="eggNOG" id="KOG0326">
    <property type="taxonomic scope" value="Eukaryota"/>
</dbReference>
<dbReference type="HOGENOM" id="CLU_003041_30_0_1"/>
<dbReference type="InParanoid" id="Q7XMK8"/>
<dbReference type="OMA" id="MNANPPF"/>
<dbReference type="OrthoDB" id="10265785at2759"/>
<dbReference type="Proteomes" id="UP000000763">
    <property type="component" value="Chromosome 4"/>
</dbReference>
<dbReference type="Proteomes" id="UP000007752">
    <property type="component" value="Chromosome 4"/>
</dbReference>
<dbReference type="Proteomes" id="UP000059680">
    <property type="component" value="Chromosome 4"/>
</dbReference>
<dbReference type="GO" id="GO:0010494">
    <property type="term" value="C:cytoplasmic stress granule"/>
    <property type="evidence" value="ECO:0000318"/>
    <property type="project" value="GO_Central"/>
</dbReference>
<dbReference type="GO" id="GO:0000932">
    <property type="term" value="C:P-body"/>
    <property type="evidence" value="ECO:0000318"/>
    <property type="project" value="GO_Central"/>
</dbReference>
<dbReference type="GO" id="GO:0005524">
    <property type="term" value="F:ATP binding"/>
    <property type="evidence" value="ECO:0007669"/>
    <property type="project" value="UniProtKB-KW"/>
</dbReference>
<dbReference type="GO" id="GO:0016887">
    <property type="term" value="F:ATP hydrolysis activity"/>
    <property type="evidence" value="ECO:0007669"/>
    <property type="project" value="RHEA"/>
</dbReference>
<dbReference type="GO" id="GO:0003729">
    <property type="term" value="F:mRNA binding"/>
    <property type="evidence" value="ECO:0000318"/>
    <property type="project" value="GO_Central"/>
</dbReference>
<dbReference type="GO" id="GO:0003724">
    <property type="term" value="F:RNA helicase activity"/>
    <property type="evidence" value="ECO:0007669"/>
    <property type="project" value="UniProtKB-EC"/>
</dbReference>
<dbReference type="GO" id="GO:0006397">
    <property type="term" value="P:mRNA processing"/>
    <property type="evidence" value="ECO:0007669"/>
    <property type="project" value="UniProtKB-KW"/>
</dbReference>
<dbReference type="GO" id="GO:0051028">
    <property type="term" value="P:mRNA transport"/>
    <property type="evidence" value="ECO:0007669"/>
    <property type="project" value="UniProtKB-KW"/>
</dbReference>
<dbReference type="GO" id="GO:0017148">
    <property type="term" value="P:negative regulation of translation"/>
    <property type="evidence" value="ECO:0000318"/>
    <property type="project" value="GO_Central"/>
</dbReference>
<dbReference type="GO" id="GO:0033962">
    <property type="term" value="P:P-body assembly"/>
    <property type="evidence" value="ECO:0000318"/>
    <property type="project" value="GO_Central"/>
</dbReference>
<dbReference type="GO" id="GO:0034063">
    <property type="term" value="P:stress granule assembly"/>
    <property type="evidence" value="ECO:0000318"/>
    <property type="project" value="GO_Central"/>
</dbReference>
<dbReference type="CDD" id="cd17940">
    <property type="entry name" value="DEADc_DDX6"/>
    <property type="match status" value="1"/>
</dbReference>
<dbReference type="CDD" id="cd18787">
    <property type="entry name" value="SF2_C_DEAD"/>
    <property type="match status" value="1"/>
</dbReference>
<dbReference type="FunFam" id="3.40.50.300:FF:000114">
    <property type="entry name" value="ATP-dependent RNA helicase DDX6"/>
    <property type="match status" value="1"/>
</dbReference>
<dbReference type="FunFam" id="3.40.50.300:FF:000364">
    <property type="entry name" value="ATP-dependent RNA helicase DDX6"/>
    <property type="match status" value="1"/>
</dbReference>
<dbReference type="Gene3D" id="3.40.50.300">
    <property type="entry name" value="P-loop containing nucleotide triphosphate hydrolases"/>
    <property type="match status" value="2"/>
</dbReference>
<dbReference type="InterPro" id="IPR011545">
    <property type="entry name" value="DEAD/DEAH_box_helicase_dom"/>
</dbReference>
<dbReference type="InterPro" id="IPR014001">
    <property type="entry name" value="Helicase_ATP-bd"/>
</dbReference>
<dbReference type="InterPro" id="IPR001650">
    <property type="entry name" value="Helicase_C-like"/>
</dbReference>
<dbReference type="InterPro" id="IPR027417">
    <property type="entry name" value="P-loop_NTPase"/>
</dbReference>
<dbReference type="InterPro" id="IPR000629">
    <property type="entry name" value="RNA-helicase_DEAD-box_CS"/>
</dbReference>
<dbReference type="InterPro" id="IPR014014">
    <property type="entry name" value="RNA_helicase_DEAD_Q_motif"/>
</dbReference>
<dbReference type="PANTHER" id="PTHR47960">
    <property type="entry name" value="DEAD-BOX ATP-DEPENDENT RNA HELICASE 50"/>
    <property type="match status" value="1"/>
</dbReference>
<dbReference type="Pfam" id="PF00270">
    <property type="entry name" value="DEAD"/>
    <property type="match status" value="1"/>
</dbReference>
<dbReference type="Pfam" id="PF00271">
    <property type="entry name" value="Helicase_C"/>
    <property type="match status" value="1"/>
</dbReference>
<dbReference type="SMART" id="SM00487">
    <property type="entry name" value="DEXDc"/>
    <property type="match status" value="1"/>
</dbReference>
<dbReference type="SMART" id="SM00490">
    <property type="entry name" value="HELICc"/>
    <property type="match status" value="1"/>
</dbReference>
<dbReference type="SUPFAM" id="SSF52540">
    <property type="entry name" value="P-loop containing nucleoside triphosphate hydrolases"/>
    <property type="match status" value="1"/>
</dbReference>
<dbReference type="PROSITE" id="PS00039">
    <property type="entry name" value="DEAD_ATP_HELICASE"/>
    <property type="match status" value="1"/>
</dbReference>
<dbReference type="PROSITE" id="PS51192">
    <property type="entry name" value="HELICASE_ATP_BIND_1"/>
    <property type="match status" value="1"/>
</dbReference>
<dbReference type="PROSITE" id="PS51194">
    <property type="entry name" value="HELICASE_CTER"/>
    <property type="match status" value="1"/>
</dbReference>
<dbReference type="PROSITE" id="PS51195">
    <property type="entry name" value="Q_MOTIF"/>
    <property type="match status" value="1"/>
</dbReference>
<reference key="1">
    <citation type="journal article" date="2002" name="Nature">
        <title>Sequence and analysis of rice chromosome 4.</title>
        <authorList>
            <person name="Feng Q."/>
            <person name="Zhang Y."/>
            <person name="Hao P."/>
            <person name="Wang S."/>
            <person name="Fu G."/>
            <person name="Huang Y."/>
            <person name="Li Y."/>
            <person name="Zhu J."/>
            <person name="Liu Y."/>
            <person name="Hu X."/>
            <person name="Jia P."/>
            <person name="Zhang Y."/>
            <person name="Zhao Q."/>
            <person name="Ying K."/>
            <person name="Yu S."/>
            <person name="Tang Y."/>
            <person name="Weng Q."/>
            <person name="Zhang L."/>
            <person name="Lu Y."/>
            <person name="Mu J."/>
            <person name="Lu Y."/>
            <person name="Zhang L.S."/>
            <person name="Yu Z."/>
            <person name="Fan D."/>
            <person name="Liu X."/>
            <person name="Lu T."/>
            <person name="Li C."/>
            <person name="Wu Y."/>
            <person name="Sun T."/>
            <person name="Lei H."/>
            <person name="Li T."/>
            <person name="Hu H."/>
            <person name="Guan J."/>
            <person name="Wu M."/>
            <person name="Zhang R."/>
            <person name="Zhou B."/>
            <person name="Chen Z."/>
            <person name="Chen L."/>
            <person name="Jin Z."/>
            <person name="Wang R."/>
            <person name="Yin H."/>
            <person name="Cai Z."/>
            <person name="Ren S."/>
            <person name="Lv G."/>
            <person name="Gu W."/>
            <person name="Zhu G."/>
            <person name="Tu Y."/>
            <person name="Jia J."/>
            <person name="Zhang Y."/>
            <person name="Chen J."/>
            <person name="Kang H."/>
            <person name="Chen X."/>
            <person name="Shao C."/>
            <person name="Sun Y."/>
            <person name="Hu Q."/>
            <person name="Zhang X."/>
            <person name="Zhang W."/>
            <person name="Wang L."/>
            <person name="Ding C."/>
            <person name="Sheng H."/>
            <person name="Gu J."/>
            <person name="Chen S."/>
            <person name="Ni L."/>
            <person name="Zhu F."/>
            <person name="Chen W."/>
            <person name="Lan L."/>
            <person name="Lai Y."/>
            <person name="Cheng Z."/>
            <person name="Gu M."/>
            <person name="Jiang J."/>
            <person name="Li J."/>
            <person name="Hong G."/>
            <person name="Xue Y."/>
            <person name="Han B."/>
        </authorList>
    </citation>
    <scope>NUCLEOTIDE SEQUENCE [LARGE SCALE GENOMIC DNA]</scope>
    <source>
        <strain>cv. Nipponbare</strain>
    </source>
</reference>
<reference key="2">
    <citation type="journal article" date="2005" name="Nature">
        <title>The map-based sequence of the rice genome.</title>
        <authorList>
            <consortium name="International rice genome sequencing project (IRGSP)"/>
        </authorList>
    </citation>
    <scope>NUCLEOTIDE SEQUENCE [LARGE SCALE GENOMIC DNA]</scope>
    <source>
        <strain>cv. Nipponbare</strain>
    </source>
</reference>
<reference key="3">
    <citation type="journal article" date="2008" name="Nucleic Acids Res.">
        <title>The rice annotation project database (RAP-DB): 2008 update.</title>
        <authorList>
            <consortium name="The rice annotation project (RAP)"/>
        </authorList>
    </citation>
    <scope>GENOME REANNOTATION</scope>
    <source>
        <strain>cv. Nipponbare</strain>
    </source>
</reference>
<reference key="4">
    <citation type="journal article" date="2013" name="Rice">
        <title>Improvement of the Oryza sativa Nipponbare reference genome using next generation sequence and optical map data.</title>
        <authorList>
            <person name="Kawahara Y."/>
            <person name="de la Bastide M."/>
            <person name="Hamilton J.P."/>
            <person name="Kanamori H."/>
            <person name="McCombie W.R."/>
            <person name="Ouyang S."/>
            <person name="Schwartz D.C."/>
            <person name="Tanaka T."/>
            <person name="Wu J."/>
            <person name="Zhou S."/>
            <person name="Childs K.L."/>
            <person name="Davidson R.M."/>
            <person name="Lin H."/>
            <person name="Quesada-Ocampo L."/>
            <person name="Vaillancourt B."/>
            <person name="Sakai H."/>
            <person name="Lee S.S."/>
            <person name="Kim J."/>
            <person name="Numa H."/>
            <person name="Itoh T."/>
            <person name="Buell C.R."/>
            <person name="Matsumoto T."/>
        </authorList>
    </citation>
    <scope>GENOME REANNOTATION</scope>
    <source>
        <strain>cv. Nipponbare</strain>
    </source>
</reference>
<reference key="5">
    <citation type="journal article" date="2005" name="PLoS Biol.">
        <title>The genomes of Oryza sativa: a history of duplications.</title>
        <authorList>
            <person name="Yu J."/>
            <person name="Wang J."/>
            <person name="Lin W."/>
            <person name="Li S."/>
            <person name="Li H."/>
            <person name="Zhou J."/>
            <person name="Ni P."/>
            <person name="Dong W."/>
            <person name="Hu S."/>
            <person name="Zeng C."/>
            <person name="Zhang J."/>
            <person name="Zhang Y."/>
            <person name="Li R."/>
            <person name="Xu Z."/>
            <person name="Li S."/>
            <person name="Li X."/>
            <person name="Zheng H."/>
            <person name="Cong L."/>
            <person name="Lin L."/>
            <person name="Yin J."/>
            <person name="Geng J."/>
            <person name="Li G."/>
            <person name="Shi J."/>
            <person name="Liu J."/>
            <person name="Lv H."/>
            <person name="Li J."/>
            <person name="Wang J."/>
            <person name="Deng Y."/>
            <person name="Ran L."/>
            <person name="Shi X."/>
            <person name="Wang X."/>
            <person name="Wu Q."/>
            <person name="Li C."/>
            <person name="Ren X."/>
            <person name="Wang J."/>
            <person name="Wang X."/>
            <person name="Li D."/>
            <person name="Liu D."/>
            <person name="Zhang X."/>
            <person name="Ji Z."/>
            <person name="Zhao W."/>
            <person name="Sun Y."/>
            <person name="Zhang Z."/>
            <person name="Bao J."/>
            <person name="Han Y."/>
            <person name="Dong L."/>
            <person name="Ji J."/>
            <person name="Chen P."/>
            <person name="Wu S."/>
            <person name="Liu J."/>
            <person name="Xiao Y."/>
            <person name="Bu D."/>
            <person name="Tan J."/>
            <person name="Yang L."/>
            <person name="Ye C."/>
            <person name="Zhang J."/>
            <person name="Xu J."/>
            <person name="Zhou Y."/>
            <person name="Yu Y."/>
            <person name="Zhang B."/>
            <person name="Zhuang S."/>
            <person name="Wei H."/>
            <person name="Liu B."/>
            <person name="Lei M."/>
            <person name="Yu H."/>
            <person name="Li Y."/>
            <person name="Xu H."/>
            <person name="Wei S."/>
            <person name="He X."/>
            <person name="Fang L."/>
            <person name="Zhang Z."/>
            <person name="Zhang Y."/>
            <person name="Huang X."/>
            <person name="Su Z."/>
            <person name="Tong W."/>
            <person name="Li J."/>
            <person name="Tong Z."/>
            <person name="Li S."/>
            <person name="Ye J."/>
            <person name="Wang L."/>
            <person name="Fang L."/>
            <person name="Lei T."/>
            <person name="Chen C.-S."/>
            <person name="Chen H.-C."/>
            <person name="Xu Z."/>
            <person name="Li H."/>
            <person name="Huang H."/>
            <person name="Zhang F."/>
            <person name="Xu H."/>
            <person name="Li N."/>
            <person name="Zhao C."/>
            <person name="Li S."/>
            <person name="Dong L."/>
            <person name="Huang Y."/>
            <person name="Li L."/>
            <person name="Xi Y."/>
            <person name="Qi Q."/>
            <person name="Li W."/>
            <person name="Zhang B."/>
            <person name="Hu W."/>
            <person name="Zhang Y."/>
            <person name="Tian X."/>
            <person name="Jiao Y."/>
            <person name="Liang X."/>
            <person name="Jin J."/>
            <person name="Gao L."/>
            <person name="Zheng W."/>
            <person name="Hao B."/>
            <person name="Liu S.-M."/>
            <person name="Wang W."/>
            <person name="Yuan L."/>
            <person name="Cao M."/>
            <person name="McDermott J."/>
            <person name="Samudrala R."/>
            <person name="Wang J."/>
            <person name="Wong G.K.-S."/>
            <person name="Yang H."/>
        </authorList>
    </citation>
    <scope>NUCLEOTIDE SEQUENCE [LARGE SCALE GENOMIC DNA]</scope>
    <source>
        <strain>cv. Nipponbare</strain>
    </source>
</reference>
<reference key="6">
    <citation type="journal article" date="2003" name="Science">
        <title>Collection, mapping, and annotation of over 28,000 cDNA clones from japonica rice.</title>
        <authorList>
            <consortium name="The rice full-length cDNA consortium"/>
        </authorList>
    </citation>
    <scope>NUCLEOTIDE SEQUENCE [LARGE SCALE MRNA]</scope>
    <source>
        <strain>cv. Nipponbare</strain>
    </source>
</reference>
<organism>
    <name type="scientific">Oryza sativa subsp. japonica</name>
    <name type="common">Rice</name>
    <dbReference type="NCBI Taxonomy" id="39947"/>
    <lineage>
        <taxon>Eukaryota</taxon>
        <taxon>Viridiplantae</taxon>
        <taxon>Streptophyta</taxon>
        <taxon>Embryophyta</taxon>
        <taxon>Tracheophyta</taxon>
        <taxon>Spermatophyta</taxon>
        <taxon>Magnoliopsida</taxon>
        <taxon>Liliopsida</taxon>
        <taxon>Poales</taxon>
        <taxon>Poaceae</taxon>
        <taxon>BOP clade</taxon>
        <taxon>Oryzoideae</taxon>
        <taxon>Oryzeae</taxon>
        <taxon>Oryzinae</taxon>
        <taxon>Oryza</taxon>
        <taxon>Oryza sativa</taxon>
    </lineage>
</organism>
<name>RH6_ORYSJ</name>
<feature type="chain" id="PRO_0000282458" description="DEAD-box ATP-dependent RNA helicase 6">
    <location>
        <begin position="1"/>
        <end position="498"/>
    </location>
</feature>
<feature type="domain" description="Helicase ATP-binding" evidence="2">
    <location>
        <begin position="155"/>
        <end position="325"/>
    </location>
</feature>
<feature type="domain" description="Helicase C-terminal" evidence="3">
    <location>
        <begin position="335"/>
        <end position="495"/>
    </location>
</feature>
<feature type="region of interest" description="Disordered" evidence="4">
    <location>
        <begin position="1"/>
        <end position="109"/>
    </location>
</feature>
<feature type="short sequence motif" description="Q motif">
    <location>
        <begin position="124"/>
        <end position="152"/>
    </location>
</feature>
<feature type="short sequence motif" description="DEAD box">
    <location>
        <begin position="273"/>
        <end position="276"/>
    </location>
</feature>
<feature type="compositionally biased region" description="Basic residues" evidence="4">
    <location>
        <begin position="33"/>
        <end position="49"/>
    </location>
</feature>
<feature type="compositionally biased region" description="Low complexity" evidence="4">
    <location>
        <begin position="50"/>
        <end position="61"/>
    </location>
</feature>
<feature type="compositionally biased region" description="Low complexity" evidence="4">
    <location>
        <begin position="75"/>
        <end position="86"/>
    </location>
</feature>
<feature type="binding site" evidence="2">
    <location>
        <begin position="168"/>
        <end position="175"/>
    </location>
    <ligand>
        <name>ATP</name>
        <dbReference type="ChEBI" id="CHEBI:30616"/>
    </ligand>
</feature>
<evidence type="ECO:0000250" key="1"/>
<evidence type="ECO:0000255" key="2">
    <source>
        <dbReference type="PROSITE-ProRule" id="PRU00541"/>
    </source>
</evidence>
<evidence type="ECO:0000255" key="3">
    <source>
        <dbReference type="PROSITE-ProRule" id="PRU00542"/>
    </source>
</evidence>
<evidence type="ECO:0000256" key="4">
    <source>
        <dbReference type="SAM" id="MobiDB-lite"/>
    </source>
</evidence>
<evidence type="ECO:0000305" key="5"/>
<accession>Q7XMK8</accession>
<accession>B7EJQ0</accession>
<gene>
    <name type="ordered locus">Os04g0533000</name>
    <name type="ordered locus">LOC_Os04g45040</name>
    <name type="ORF">OsJ_15580</name>
    <name type="ORF">OSJNBb0039L24.10</name>
</gene>
<proteinExistence type="evidence at transcript level"/>
<keyword id="KW-0067">ATP-binding</keyword>
<keyword id="KW-0963">Cytoplasm</keyword>
<keyword id="KW-0347">Helicase</keyword>
<keyword id="KW-0378">Hydrolase</keyword>
<keyword id="KW-0507">mRNA processing</keyword>
<keyword id="KW-0509">mRNA transport</keyword>
<keyword id="KW-0547">Nucleotide-binding</keyword>
<keyword id="KW-1185">Reference proteome</keyword>
<keyword id="KW-0694">RNA-binding</keyword>
<keyword id="KW-0810">Translation regulation</keyword>
<keyword id="KW-0813">Transport</keyword>
<protein>
    <recommendedName>
        <fullName>DEAD-box ATP-dependent RNA helicase 6</fullName>
        <ecNumber>3.6.4.13</ecNumber>
    </recommendedName>
</protein>